<name>PYRB_PELPD</name>
<dbReference type="EC" id="2.1.3.2" evidence="1"/>
<dbReference type="EMBL" id="CP000482">
    <property type="protein sequence ID" value="ABL00134.1"/>
    <property type="molecule type" value="Genomic_DNA"/>
</dbReference>
<dbReference type="RefSeq" id="WP_011736388.1">
    <property type="nucleotide sequence ID" value="NC_008609.1"/>
</dbReference>
<dbReference type="SMR" id="A1AS13"/>
<dbReference type="STRING" id="338966.Ppro_2529"/>
<dbReference type="KEGG" id="ppd:Ppro_2529"/>
<dbReference type="eggNOG" id="COG0540">
    <property type="taxonomic scope" value="Bacteria"/>
</dbReference>
<dbReference type="HOGENOM" id="CLU_043846_2_0_7"/>
<dbReference type="OrthoDB" id="9774690at2"/>
<dbReference type="UniPathway" id="UPA00070">
    <property type="reaction ID" value="UER00116"/>
</dbReference>
<dbReference type="Proteomes" id="UP000006732">
    <property type="component" value="Chromosome"/>
</dbReference>
<dbReference type="GO" id="GO:0005829">
    <property type="term" value="C:cytosol"/>
    <property type="evidence" value="ECO:0007669"/>
    <property type="project" value="TreeGrafter"/>
</dbReference>
<dbReference type="GO" id="GO:0016597">
    <property type="term" value="F:amino acid binding"/>
    <property type="evidence" value="ECO:0007669"/>
    <property type="project" value="InterPro"/>
</dbReference>
<dbReference type="GO" id="GO:0004070">
    <property type="term" value="F:aspartate carbamoyltransferase activity"/>
    <property type="evidence" value="ECO:0007669"/>
    <property type="project" value="UniProtKB-UniRule"/>
</dbReference>
<dbReference type="GO" id="GO:0006207">
    <property type="term" value="P:'de novo' pyrimidine nucleobase biosynthetic process"/>
    <property type="evidence" value="ECO:0007669"/>
    <property type="project" value="InterPro"/>
</dbReference>
<dbReference type="GO" id="GO:0044205">
    <property type="term" value="P:'de novo' UMP biosynthetic process"/>
    <property type="evidence" value="ECO:0007669"/>
    <property type="project" value="UniProtKB-UniRule"/>
</dbReference>
<dbReference type="GO" id="GO:0006520">
    <property type="term" value="P:amino acid metabolic process"/>
    <property type="evidence" value="ECO:0007669"/>
    <property type="project" value="InterPro"/>
</dbReference>
<dbReference type="FunFam" id="3.40.50.1370:FF:000007">
    <property type="entry name" value="Aspartate carbamoyltransferase"/>
    <property type="match status" value="1"/>
</dbReference>
<dbReference type="Gene3D" id="3.40.50.1370">
    <property type="entry name" value="Aspartate/ornithine carbamoyltransferase"/>
    <property type="match status" value="2"/>
</dbReference>
<dbReference type="HAMAP" id="MF_00001">
    <property type="entry name" value="Asp_carb_tr"/>
    <property type="match status" value="1"/>
</dbReference>
<dbReference type="InterPro" id="IPR006132">
    <property type="entry name" value="Asp/Orn_carbamoyltranf_P-bd"/>
</dbReference>
<dbReference type="InterPro" id="IPR006130">
    <property type="entry name" value="Asp/Orn_carbamoylTrfase"/>
</dbReference>
<dbReference type="InterPro" id="IPR036901">
    <property type="entry name" value="Asp/Orn_carbamoylTrfase_sf"/>
</dbReference>
<dbReference type="InterPro" id="IPR002082">
    <property type="entry name" value="Asp_carbamoyltransf"/>
</dbReference>
<dbReference type="InterPro" id="IPR006131">
    <property type="entry name" value="Asp_carbamoyltransf_Asp/Orn-bd"/>
</dbReference>
<dbReference type="NCBIfam" id="TIGR00670">
    <property type="entry name" value="asp_carb_tr"/>
    <property type="match status" value="1"/>
</dbReference>
<dbReference type="NCBIfam" id="NF002032">
    <property type="entry name" value="PRK00856.1"/>
    <property type="match status" value="1"/>
</dbReference>
<dbReference type="PANTHER" id="PTHR45753:SF6">
    <property type="entry name" value="ASPARTATE CARBAMOYLTRANSFERASE"/>
    <property type="match status" value="1"/>
</dbReference>
<dbReference type="PANTHER" id="PTHR45753">
    <property type="entry name" value="ORNITHINE CARBAMOYLTRANSFERASE, MITOCHONDRIAL"/>
    <property type="match status" value="1"/>
</dbReference>
<dbReference type="Pfam" id="PF00185">
    <property type="entry name" value="OTCace"/>
    <property type="match status" value="1"/>
</dbReference>
<dbReference type="Pfam" id="PF02729">
    <property type="entry name" value="OTCace_N"/>
    <property type="match status" value="1"/>
</dbReference>
<dbReference type="PRINTS" id="PR00100">
    <property type="entry name" value="AOTCASE"/>
</dbReference>
<dbReference type="PRINTS" id="PR00101">
    <property type="entry name" value="ATCASE"/>
</dbReference>
<dbReference type="SUPFAM" id="SSF53671">
    <property type="entry name" value="Aspartate/ornithine carbamoyltransferase"/>
    <property type="match status" value="1"/>
</dbReference>
<dbReference type="PROSITE" id="PS00097">
    <property type="entry name" value="CARBAMOYLTRANSFERASE"/>
    <property type="match status" value="1"/>
</dbReference>
<comment type="function">
    <text evidence="1">Catalyzes the condensation of carbamoyl phosphate and aspartate to form carbamoyl aspartate and inorganic phosphate, the committed step in the de novo pyrimidine nucleotide biosynthesis pathway.</text>
</comment>
<comment type="catalytic activity">
    <reaction evidence="1">
        <text>carbamoyl phosphate + L-aspartate = N-carbamoyl-L-aspartate + phosphate + H(+)</text>
        <dbReference type="Rhea" id="RHEA:20013"/>
        <dbReference type="ChEBI" id="CHEBI:15378"/>
        <dbReference type="ChEBI" id="CHEBI:29991"/>
        <dbReference type="ChEBI" id="CHEBI:32814"/>
        <dbReference type="ChEBI" id="CHEBI:43474"/>
        <dbReference type="ChEBI" id="CHEBI:58228"/>
        <dbReference type="EC" id="2.1.3.2"/>
    </reaction>
</comment>
<comment type="pathway">
    <text evidence="1">Pyrimidine metabolism; UMP biosynthesis via de novo pathway; (S)-dihydroorotate from bicarbonate: step 2/3.</text>
</comment>
<comment type="subunit">
    <text evidence="1">Heterododecamer (2C3:3R2) of six catalytic PyrB chains organized as two trimers (C3), and six regulatory PyrI chains organized as three dimers (R2).</text>
</comment>
<comment type="similarity">
    <text evidence="1">Belongs to the aspartate/ornithine carbamoyltransferase superfamily. ATCase family.</text>
</comment>
<proteinExistence type="inferred from homology"/>
<organism>
    <name type="scientific">Pelobacter propionicus (strain DSM 2379 / NBRC 103807 / OttBd1)</name>
    <dbReference type="NCBI Taxonomy" id="338966"/>
    <lineage>
        <taxon>Bacteria</taxon>
        <taxon>Pseudomonadati</taxon>
        <taxon>Thermodesulfobacteriota</taxon>
        <taxon>Desulfuromonadia</taxon>
        <taxon>Desulfuromonadales</taxon>
        <taxon>Desulfuromonadaceae</taxon>
        <taxon>Pelobacter</taxon>
    </lineage>
</organism>
<sequence length="310" mass="34172">MANFKHKDIIALQDLTKQEIELLLSTAESMREINNRDIKKVPTLRGKTIVNLFYESSTRTRTSFELAAKRLSADTVNISPSTSSATKGETLADTALNLLAMKPDIIVMRHSVSGSHYFLSKKLPCSIVNAGDGVHEHPSQGLLDMLTMKDRFGRLDGLKVAIVGDISHSRVARSNIQGLTKLGSQVFLAGPPTMMPPGVERLGNVTVCDSLREAIQDADVVMMLRIQQERQGKTLMPNAREYARYFGLNPENLKLAKPDAMVMHPGPINRGVEMASSVVDGDQSWILKQVENGVAVRMSMLYHVCEGELE</sequence>
<gene>
    <name evidence="1" type="primary">pyrB</name>
    <name type="ordered locus">Ppro_2529</name>
</gene>
<keyword id="KW-0665">Pyrimidine biosynthesis</keyword>
<keyword id="KW-1185">Reference proteome</keyword>
<keyword id="KW-0808">Transferase</keyword>
<reference key="1">
    <citation type="submission" date="2006-10" db="EMBL/GenBank/DDBJ databases">
        <title>Complete sequence of chromosome of Pelobacter propionicus DSM 2379.</title>
        <authorList>
            <consortium name="US DOE Joint Genome Institute"/>
            <person name="Copeland A."/>
            <person name="Lucas S."/>
            <person name="Lapidus A."/>
            <person name="Barry K."/>
            <person name="Detter J.C."/>
            <person name="Glavina del Rio T."/>
            <person name="Hammon N."/>
            <person name="Israni S."/>
            <person name="Dalin E."/>
            <person name="Tice H."/>
            <person name="Pitluck S."/>
            <person name="Saunders E."/>
            <person name="Brettin T."/>
            <person name="Bruce D."/>
            <person name="Han C."/>
            <person name="Tapia R."/>
            <person name="Schmutz J."/>
            <person name="Larimer F."/>
            <person name="Land M."/>
            <person name="Hauser L."/>
            <person name="Kyrpides N."/>
            <person name="Kim E."/>
            <person name="Lovley D."/>
            <person name="Richardson P."/>
        </authorList>
    </citation>
    <scope>NUCLEOTIDE SEQUENCE [LARGE SCALE GENOMIC DNA]</scope>
    <source>
        <strain>DSM 2379 / NBRC 103807 / OttBd1</strain>
    </source>
</reference>
<accession>A1AS13</accession>
<protein>
    <recommendedName>
        <fullName evidence="1">Aspartate carbamoyltransferase catalytic subunit</fullName>
        <ecNumber evidence="1">2.1.3.2</ecNumber>
    </recommendedName>
    <alternativeName>
        <fullName evidence="1">Aspartate transcarbamylase</fullName>
        <shortName evidence="1">ATCase</shortName>
    </alternativeName>
</protein>
<feature type="chain" id="PRO_0000321133" description="Aspartate carbamoyltransferase catalytic subunit">
    <location>
        <begin position="1"/>
        <end position="310"/>
    </location>
</feature>
<feature type="binding site" evidence="1">
    <location>
        <position position="59"/>
    </location>
    <ligand>
        <name>carbamoyl phosphate</name>
        <dbReference type="ChEBI" id="CHEBI:58228"/>
    </ligand>
</feature>
<feature type="binding site" evidence="1">
    <location>
        <position position="60"/>
    </location>
    <ligand>
        <name>carbamoyl phosphate</name>
        <dbReference type="ChEBI" id="CHEBI:58228"/>
    </ligand>
</feature>
<feature type="binding site" evidence="1">
    <location>
        <position position="87"/>
    </location>
    <ligand>
        <name>L-aspartate</name>
        <dbReference type="ChEBI" id="CHEBI:29991"/>
    </ligand>
</feature>
<feature type="binding site" evidence="1">
    <location>
        <position position="109"/>
    </location>
    <ligand>
        <name>carbamoyl phosphate</name>
        <dbReference type="ChEBI" id="CHEBI:58228"/>
    </ligand>
</feature>
<feature type="binding site" evidence="1">
    <location>
        <position position="137"/>
    </location>
    <ligand>
        <name>carbamoyl phosphate</name>
        <dbReference type="ChEBI" id="CHEBI:58228"/>
    </ligand>
</feature>
<feature type="binding site" evidence="1">
    <location>
        <position position="140"/>
    </location>
    <ligand>
        <name>carbamoyl phosphate</name>
        <dbReference type="ChEBI" id="CHEBI:58228"/>
    </ligand>
</feature>
<feature type="binding site" evidence="1">
    <location>
        <position position="170"/>
    </location>
    <ligand>
        <name>L-aspartate</name>
        <dbReference type="ChEBI" id="CHEBI:29991"/>
    </ligand>
</feature>
<feature type="binding site" evidence="1">
    <location>
        <position position="225"/>
    </location>
    <ligand>
        <name>L-aspartate</name>
        <dbReference type="ChEBI" id="CHEBI:29991"/>
    </ligand>
</feature>
<feature type="binding site" evidence="1">
    <location>
        <position position="266"/>
    </location>
    <ligand>
        <name>carbamoyl phosphate</name>
        <dbReference type="ChEBI" id="CHEBI:58228"/>
    </ligand>
</feature>
<feature type="binding site" evidence="1">
    <location>
        <position position="267"/>
    </location>
    <ligand>
        <name>carbamoyl phosphate</name>
        <dbReference type="ChEBI" id="CHEBI:58228"/>
    </ligand>
</feature>
<evidence type="ECO:0000255" key="1">
    <source>
        <dbReference type="HAMAP-Rule" id="MF_00001"/>
    </source>
</evidence>